<accession>B2U4X5</accession>
<feature type="chain" id="PRO_1000133850" description="PF03932 family protein CutC">
    <location>
        <begin position="1"/>
        <end position="248"/>
    </location>
</feature>
<name>CUTC_SHIB3</name>
<dbReference type="EMBL" id="CP001063">
    <property type="protein sequence ID" value="ACD07388.1"/>
    <property type="molecule type" value="Genomic_DNA"/>
</dbReference>
<dbReference type="RefSeq" id="WP_001185756.1">
    <property type="nucleotide sequence ID" value="NC_010658.1"/>
</dbReference>
<dbReference type="SMR" id="B2U4X5"/>
<dbReference type="STRING" id="344609.SbBS512_E2167"/>
<dbReference type="KEGG" id="sbc:SbBS512_E2167"/>
<dbReference type="HOGENOM" id="CLU_050555_3_1_6"/>
<dbReference type="Proteomes" id="UP000001030">
    <property type="component" value="Chromosome"/>
</dbReference>
<dbReference type="GO" id="GO:0005737">
    <property type="term" value="C:cytoplasm"/>
    <property type="evidence" value="ECO:0007669"/>
    <property type="project" value="UniProtKB-SubCell"/>
</dbReference>
<dbReference type="GO" id="GO:0005507">
    <property type="term" value="F:copper ion binding"/>
    <property type="evidence" value="ECO:0007669"/>
    <property type="project" value="TreeGrafter"/>
</dbReference>
<dbReference type="FunFam" id="3.20.20.380:FF:000001">
    <property type="entry name" value="Copper homeostasis protein CutC"/>
    <property type="match status" value="1"/>
</dbReference>
<dbReference type="Gene3D" id="3.20.20.380">
    <property type="entry name" value="Copper homeostasis (CutC) domain"/>
    <property type="match status" value="1"/>
</dbReference>
<dbReference type="HAMAP" id="MF_00795">
    <property type="entry name" value="CutC"/>
    <property type="match status" value="1"/>
</dbReference>
<dbReference type="InterPro" id="IPR005627">
    <property type="entry name" value="CutC-like"/>
</dbReference>
<dbReference type="InterPro" id="IPR036822">
    <property type="entry name" value="CutC-like_dom_sf"/>
</dbReference>
<dbReference type="NCBIfam" id="NF008603">
    <property type="entry name" value="PRK11572.1"/>
    <property type="match status" value="1"/>
</dbReference>
<dbReference type="PANTHER" id="PTHR12598">
    <property type="entry name" value="COPPER HOMEOSTASIS PROTEIN CUTC"/>
    <property type="match status" value="1"/>
</dbReference>
<dbReference type="PANTHER" id="PTHR12598:SF0">
    <property type="entry name" value="COPPER HOMEOSTASIS PROTEIN CUTC HOMOLOG"/>
    <property type="match status" value="1"/>
</dbReference>
<dbReference type="Pfam" id="PF03932">
    <property type="entry name" value="CutC"/>
    <property type="match status" value="1"/>
</dbReference>
<dbReference type="SUPFAM" id="SSF110395">
    <property type="entry name" value="CutC-like"/>
    <property type="match status" value="1"/>
</dbReference>
<organism>
    <name type="scientific">Shigella boydii serotype 18 (strain CDC 3083-94 / BS512)</name>
    <dbReference type="NCBI Taxonomy" id="344609"/>
    <lineage>
        <taxon>Bacteria</taxon>
        <taxon>Pseudomonadati</taxon>
        <taxon>Pseudomonadota</taxon>
        <taxon>Gammaproteobacteria</taxon>
        <taxon>Enterobacterales</taxon>
        <taxon>Enterobacteriaceae</taxon>
        <taxon>Shigella</taxon>
    </lineage>
</organism>
<sequence>MALLEICCYSMECALTAQQNGADRVELCAAPKEGGLTPSLGVLKSVRQWVTIPVHPIIRPRGGDFCYSDGEFAAILEDVLTVRELGFPGLVTGVLDVDGNVDMPRMEKIMAAAGPLAVTFHRAFDMCANPLNTLSNLAELGIARVLTSGQKSDALQGLSKIMELIAHRDAPIIMAGAGVRAENLHHFLDAGVLEVHSSAGAWQASPMRYRNQGLSMSSDAHADEYSRYVVDGAAVAEMKGIIERHQAK</sequence>
<evidence type="ECO:0000255" key="1">
    <source>
        <dbReference type="HAMAP-Rule" id="MF_00795"/>
    </source>
</evidence>
<keyword id="KW-0963">Cytoplasm</keyword>
<keyword id="KW-1185">Reference proteome</keyword>
<proteinExistence type="inferred from homology"/>
<reference key="1">
    <citation type="submission" date="2008-05" db="EMBL/GenBank/DDBJ databases">
        <title>Complete sequence of Shigella boydii serotype 18 strain BS512.</title>
        <authorList>
            <person name="Rasko D.A."/>
            <person name="Rosovitz M."/>
            <person name="Maurelli A.T."/>
            <person name="Myers G."/>
            <person name="Seshadri R."/>
            <person name="Cer R."/>
            <person name="Jiang L."/>
            <person name="Ravel J."/>
            <person name="Sebastian Y."/>
        </authorList>
    </citation>
    <scope>NUCLEOTIDE SEQUENCE [LARGE SCALE GENOMIC DNA]</scope>
    <source>
        <strain>CDC 3083-94 / BS512</strain>
    </source>
</reference>
<gene>
    <name evidence="1" type="primary">cutC</name>
    <name type="ordered locus">SbBS512_E2167</name>
</gene>
<comment type="subunit">
    <text evidence="1">Homodimer.</text>
</comment>
<comment type="subcellular location">
    <subcellularLocation>
        <location evidence="1">Cytoplasm</location>
    </subcellularLocation>
</comment>
<comment type="similarity">
    <text evidence="1">Belongs to the CutC family.</text>
</comment>
<comment type="caution">
    <text evidence="1">Once thought to be involved in copper homeostasis, experiments in E.coli have shown this is not the case.</text>
</comment>
<protein>
    <recommendedName>
        <fullName evidence="1">PF03932 family protein CutC</fullName>
    </recommendedName>
</protein>